<comment type="subunit">
    <text evidence="6">Interacts with BT1.</text>
</comment>
<comment type="subcellular location">
    <subcellularLocation>
        <location evidence="7">Nucleus</location>
    </subcellularLocation>
</comment>
<comment type="alternative products">
    <event type="alternative splicing"/>
    <isoform>
        <id>Q93YS6-1</id>
        <name>1</name>
        <sequence type="displayed"/>
    </isoform>
    <text>A number of isoforms are produced. According to EST sequences.</text>
</comment>
<comment type="sequence caution" evidence="7">
    <conflict type="erroneous gene model prediction">
        <sequence resource="EMBL-CDS" id="CAB87766"/>
    </conflict>
</comment>
<name>GTE9_ARATH</name>
<organism>
    <name type="scientific">Arabidopsis thaliana</name>
    <name type="common">Mouse-ear cress</name>
    <dbReference type="NCBI Taxonomy" id="3702"/>
    <lineage>
        <taxon>Eukaryota</taxon>
        <taxon>Viridiplantae</taxon>
        <taxon>Streptophyta</taxon>
        <taxon>Embryophyta</taxon>
        <taxon>Tracheophyta</taxon>
        <taxon>Spermatophyta</taxon>
        <taxon>Magnoliopsida</taxon>
        <taxon>eudicotyledons</taxon>
        <taxon>Gunneridae</taxon>
        <taxon>Pentapetalae</taxon>
        <taxon>rosids</taxon>
        <taxon>malvids</taxon>
        <taxon>Brassicales</taxon>
        <taxon>Brassicaceae</taxon>
        <taxon>Camelineae</taxon>
        <taxon>Arabidopsis</taxon>
    </lineage>
</organism>
<keyword id="KW-0010">Activator</keyword>
<keyword id="KW-0025">Alternative splicing</keyword>
<keyword id="KW-0103">Bromodomain</keyword>
<keyword id="KW-0175">Coiled coil</keyword>
<keyword id="KW-0539">Nucleus</keyword>
<keyword id="KW-0597">Phosphoprotein</keyword>
<keyword id="KW-1185">Reference proteome</keyword>
<keyword id="KW-0804">Transcription</keyword>
<keyword id="KW-0805">Transcription regulation</keyword>
<gene>
    <name type="primary">GTE9</name>
    <name type="synonym">BET9</name>
    <name type="ordered locus">At5g14270</name>
    <name type="ORF">F18O22.60</name>
</gene>
<proteinExistence type="evidence at protein level"/>
<protein>
    <recommendedName>
        <fullName>Transcription factor GTE9</fullName>
    </recommendedName>
    <alternativeName>
        <fullName>BROMODOMAIN AND EXTRATERMINAL DOMAIN PROTEIN 9</fullName>
        <shortName>AtBET9</shortName>
    </alternativeName>
    <alternativeName>
        <fullName>Bromodomain-containing protein GTE9</fullName>
    </alternativeName>
    <alternativeName>
        <fullName>Protein GLOBAL TRANSCRIPTION FACTOR GROUP E9</fullName>
    </alternativeName>
</protein>
<sequence length="688" mass="75895">MTERNGGFPGDYCFEAPGGDYDEGSDSPRVSEGSNCSKRKVGETFGVSKMVLPLSGLSSSDRKELIRRLRQELEQIRVFQKNFELSRTVALTSSSASGLTRVKSFGMSRCSTGPGKTVNPISAASKPTPVTTAVMLLMKQCEALLKRLMSHQYGWVFNTPVDVVKLNILDYFNVIEHPMDLGTVKNKLTSGTYSCPSEFAADVRLTFSNAMTYNPPGNDVYVMADTLRKFFEVRWKTLEKKLSGTKVHTEPSNLDAHKEKHIVIPVPMAKKRKTTAVDCENVVDPAKRVMTDEDRLKLGKDLESLTEFPAQLINFLRDHNSNEGGIGDDEIEIDINDLSDHALFQLRDLLDEHLREIQNKKSSVEPCEIELLHGSVPGNSSMQHCDGSELDDEVVDIGENEHPTSSISPVTIEKDLVLGNSNGNSLGSVSGDPKMSSLPRASKGLGTIDLEPMLDGATSASPTRGSSVGGLDQLESASPEKISSVEADCQQDGNSAQNEKQLPPEKSYRAAILKNRFADIILKAREKPLNQNDTRDPEKLQREREELELQKKKEKARLQAEAKAAEEARRKAEAQAAAEAAAEAKRKLELEREAARQALMEMEQSVELNENAKFLEDLELLKTVDTDHLTNTIEEEDGPDVGLRSFSFGGSNPLEQLGLFMKQDEDEEEADPLTSPAPEIDIEEGEID</sequence>
<evidence type="ECO:0000250" key="1"/>
<evidence type="ECO:0000255" key="2"/>
<evidence type="ECO:0000255" key="3">
    <source>
        <dbReference type="PROSITE-ProRule" id="PRU00035"/>
    </source>
</evidence>
<evidence type="ECO:0000255" key="4">
    <source>
        <dbReference type="PROSITE-ProRule" id="PRU00857"/>
    </source>
</evidence>
<evidence type="ECO:0000256" key="5">
    <source>
        <dbReference type="SAM" id="MobiDB-lite"/>
    </source>
</evidence>
<evidence type="ECO:0000269" key="6">
    <source>
    </source>
</evidence>
<evidence type="ECO:0000305" key="7"/>
<evidence type="ECO:0007744" key="8">
    <source>
    </source>
</evidence>
<reference key="1">
    <citation type="journal article" date="2000" name="Nature">
        <title>Sequence and analysis of chromosome 5 of the plant Arabidopsis thaliana.</title>
        <authorList>
            <person name="Tabata S."/>
            <person name="Kaneko T."/>
            <person name="Nakamura Y."/>
            <person name="Kotani H."/>
            <person name="Kato T."/>
            <person name="Asamizu E."/>
            <person name="Miyajima N."/>
            <person name="Sasamoto S."/>
            <person name="Kimura T."/>
            <person name="Hosouchi T."/>
            <person name="Kawashima K."/>
            <person name="Kohara M."/>
            <person name="Matsumoto M."/>
            <person name="Matsuno A."/>
            <person name="Muraki A."/>
            <person name="Nakayama S."/>
            <person name="Nakazaki N."/>
            <person name="Naruo K."/>
            <person name="Okumura S."/>
            <person name="Shinpo S."/>
            <person name="Takeuchi C."/>
            <person name="Wada T."/>
            <person name="Watanabe A."/>
            <person name="Yamada M."/>
            <person name="Yasuda M."/>
            <person name="Sato S."/>
            <person name="de la Bastide M."/>
            <person name="Huang E."/>
            <person name="Spiegel L."/>
            <person name="Gnoj L."/>
            <person name="O'Shaughnessy A."/>
            <person name="Preston R."/>
            <person name="Habermann K."/>
            <person name="Murray J."/>
            <person name="Johnson D."/>
            <person name="Rohlfing T."/>
            <person name="Nelson J."/>
            <person name="Stoneking T."/>
            <person name="Pepin K."/>
            <person name="Spieth J."/>
            <person name="Sekhon M."/>
            <person name="Armstrong J."/>
            <person name="Becker M."/>
            <person name="Belter E."/>
            <person name="Cordum H."/>
            <person name="Cordes M."/>
            <person name="Courtney L."/>
            <person name="Courtney W."/>
            <person name="Dante M."/>
            <person name="Du H."/>
            <person name="Edwards J."/>
            <person name="Fryman J."/>
            <person name="Haakensen B."/>
            <person name="Lamar E."/>
            <person name="Latreille P."/>
            <person name="Leonard S."/>
            <person name="Meyer R."/>
            <person name="Mulvaney E."/>
            <person name="Ozersky P."/>
            <person name="Riley A."/>
            <person name="Strowmatt C."/>
            <person name="Wagner-McPherson C."/>
            <person name="Wollam A."/>
            <person name="Yoakum M."/>
            <person name="Bell M."/>
            <person name="Dedhia N."/>
            <person name="Parnell L."/>
            <person name="Shah R."/>
            <person name="Rodriguez M."/>
            <person name="Hoon See L."/>
            <person name="Vil D."/>
            <person name="Baker J."/>
            <person name="Kirchoff K."/>
            <person name="Toth K."/>
            <person name="King L."/>
            <person name="Bahret A."/>
            <person name="Miller B."/>
            <person name="Marra M.A."/>
            <person name="Martienssen R."/>
            <person name="McCombie W.R."/>
            <person name="Wilson R.K."/>
            <person name="Murphy G."/>
            <person name="Bancroft I."/>
            <person name="Volckaert G."/>
            <person name="Wambutt R."/>
            <person name="Duesterhoeft A."/>
            <person name="Stiekema W."/>
            <person name="Pohl T."/>
            <person name="Entian K.-D."/>
            <person name="Terryn N."/>
            <person name="Hartley N."/>
            <person name="Bent E."/>
            <person name="Johnson S."/>
            <person name="Langham S.-A."/>
            <person name="McCullagh B."/>
            <person name="Robben J."/>
            <person name="Grymonprez B."/>
            <person name="Zimmermann W."/>
            <person name="Ramsperger U."/>
            <person name="Wedler H."/>
            <person name="Balke K."/>
            <person name="Wedler E."/>
            <person name="Peters S."/>
            <person name="van Staveren M."/>
            <person name="Dirkse W."/>
            <person name="Mooijman P."/>
            <person name="Klein Lankhorst R."/>
            <person name="Weitzenegger T."/>
            <person name="Bothe G."/>
            <person name="Rose M."/>
            <person name="Hauf J."/>
            <person name="Berneiser S."/>
            <person name="Hempel S."/>
            <person name="Feldpausch M."/>
            <person name="Lamberth S."/>
            <person name="Villarroel R."/>
            <person name="Gielen J."/>
            <person name="Ardiles W."/>
            <person name="Bents O."/>
            <person name="Lemcke K."/>
            <person name="Kolesov G."/>
            <person name="Mayer K.F.X."/>
            <person name="Rudd S."/>
            <person name="Schoof H."/>
            <person name="Schueller C."/>
            <person name="Zaccaria P."/>
            <person name="Mewes H.-W."/>
            <person name="Bevan M."/>
            <person name="Fransz P.F."/>
        </authorList>
    </citation>
    <scope>NUCLEOTIDE SEQUENCE [LARGE SCALE GENOMIC DNA]</scope>
    <source>
        <strain>cv. Columbia</strain>
    </source>
</reference>
<reference key="2">
    <citation type="journal article" date="2017" name="Plant J.">
        <title>Araport11: a complete reannotation of the Arabidopsis thaliana reference genome.</title>
        <authorList>
            <person name="Cheng C.Y."/>
            <person name="Krishnakumar V."/>
            <person name="Chan A.P."/>
            <person name="Thibaud-Nissen F."/>
            <person name="Schobel S."/>
            <person name="Town C.D."/>
        </authorList>
    </citation>
    <scope>GENOME REANNOTATION</scope>
    <source>
        <strain>cv. Columbia</strain>
    </source>
</reference>
<reference key="3">
    <citation type="journal article" date="2003" name="Science">
        <title>Empirical analysis of transcriptional activity in the Arabidopsis genome.</title>
        <authorList>
            <person name="Yamada K."/>
            <person name="Lim J."/>
            <person name="Dale J.M."/>
            <person name="Chen H."/>
            <person name="Shinn P."/>
            <person name="Palm C.J."/>
            <person name="Southwick A.M."/>
            <person name="Wu H.C."/>
            <person name="Kim C.J."/>
            <person name="Nguyen M."/>
            <person name="Pham P.K."/>
            <person name="Cheuk R.F."/>
            <person name="Karlin-Newmann G."/>
            <person name="Liu S.X."/>
            <person name="Lam B."/>
            <person name="Sakano H."/>
            <person name="Wu T."/>
            <person name="Yu G."/>
            <person name="Miranda M."/>
            <person name="Quach H.L."/>
            <person name="Tripp M."/>
            <person name="Chang C.H."/>
            <person name="Lee J.M."/>
            <person name="Toriumi M.J."/>
            <person name="Chan M.M."/>
            <person name="Tang C.C."/>
            <person name="Onodera C.S."/>
            <person name="Deng J.M."/>
            <person name="Akiyama K."/>
            <person name="Ansari Y."/>
            <person name="Arakawa T."/>
            <person name="Banh J."/>
            <person name="Banno F."/>
            <person name="Bowser L."/>
            <person name="Brooks S.Y."/>
            <person name="Carninci P."/>
            <person name="Chao Q."/>
            <person name="Choy N."/>
            <person name="Enju A."/>
            <person name="Goldsmith A.D."/>
            <person name="Gurjal M."/>
            <person name="Hansen N.F."/>
            <person name="Hayashizaki Y."/>
            <person name="Johnson-Hopson C."/>
            <person name="Hsuan V.W."/>
            <person name="Iida K."/>
            <person name="Karnes M."/>
            <person name="Khan S."/>
            <person name="Koesema E."/>
            <person name="Ishida J."/>
            <person name="Jiang P.X."/>
            <person name="Jones T."/>
            <person name="Kawai J."/>
            <person name="Kamiya A."/>
            <person name="Meyers C."/>
            <person name="Nakajima M."/>
            <person name="Narusaka M."/>
            <person name="Seki M."/>
            <person name="Sakurai T."/>
            <person name="Satou M."/>
            <person name="Tamse R."/>
            <person name="Vaysberg M."/>
            <person name="Wallender E.K."/>
            <person name="Wong C."/>
            <person name="Yamamura Y."/>
            <person name="Yuan S."/>
            <person name="Shinozaki K."/>
            <person name="Davis R.W."/>
            <person name="Theologis A."/>
            <person name="Ecker J.R."/>
        </authorList>
    </citation>
    <scope>NUCLEOTIDE SEQUENCE [LARGE SCALE MRNA]</scope>
    <source>
        <strain>cv. Columbia</strain>
    </source>
</reference>
<reference key="4">
    <citation type="journal article" date="2009" name="DNA Res.">
        <title>Analysis of multiple occurrences of alternative splicing events in Arabidopsis thaliana using novel sequenced full-length cDNAs.</title>
        <authorList>
            <person name="Iida K."/>
            <person name="Fukami-Kobayashi K."/>
            <person name="Toyoda A."/>
            <person name="Sakaki Y."/>
            <person name="Kobayashi M."/>
            <person name="Seki M."/>
            <person name="Shinozaki K."/>
        </authorList>
    </citation>
    <scope>NUCLEOTIDE SEQUENCE [LARGE SCALE MRNA] OF 1-554</scope>
    <source>
        <strain>cv. Columbia</strain>
        <tissue>Rosette leaf</tissue>
    </source>
</reference>
<reference key="5">
    <citation type="journal article" date="2002" name="Nucleic Acids Res.">
        <title>Analysis of histone acetyltransferase and histone deacetylase families of Arabidopsis thaliana suggests functional diversification of chromatin modification among multicellular eukaryotes.</title>
        <authorList>
            <person name="Pandey R."/>
            <person name="Mueller A."/>
            <person name="Napoli C.A."/>
            <person name="Selinger D.A."/>
            <person name="Pikaard C.S."/>
            <person name="Richards E.J."/>
            <person name="Bender J."/>
            <person name="Mount D.W."/>
            <person name="Jorgensen R.A."/>
        </authorList>
    </citation>
    <scope>GENE FAMILY</scope>
    <scope>NOMENCLATURE</scope>
</reference>
<reference key="6">
    <citation type="journal article" date="2004" name="Plant Mol. Biol.">
        <title>A novel family of Ca2+/calmodulin-binding proteins involved in transcriptional regulation: interaction with fsh/Ring3 class transcription activators.</title>
        <authorList>
            <person name="Du L."/>
            <person name="Poovaiah B.W."/>
        </authorList>
    </citation>
    <scope>INTERACTION WITH BT1</scope>
</reference>
<reference key="7">
    <citation type="journal article" date="2009" name="Plant Physiol.">
        <title>Large-scale Arabidopsis phosphoproteome profiling reveals novel chloroplast kinase substrates and phosphorylation networks.</title>
        <authorList>
            <person name="Reiland S."/>
            <person name="Messerli G."/>
            <person name="Baerenfaller K."/>
            <person name="Gerrits B."/>
            <person name="Endler A."/>
            <person name="Grossmann J."/>
            <person name="Gruissem W."/>
            <person name="Baginsky S."/>
        </authorList>
    </citation>
    <scope>PHOSPHORYLATION [LARGE SCALE ANALYSIS] AT SER-478</scope>
    <scope>IDENTIFICATION BY MASS SPECTROMETRY [LARGE SCALE ANALYSIS]</scope>
</reference>
<dbReference type="EMBL" id="AL163817">
    <property type="protein sequence ID" value="CAB87766.1"/>
    <property type="status" value="ALT_SEQ"/>
    <property type="molecule type" value="Genomic_DNA"/>
</dbReference>
<dbReference type="EMBL" id="CP002688">
    <property type="protein sequence ID" value="AED92010.1"/>
    <property type="molecule type" value="Genomic_DNA"/>
</dbReference>
<dbReference type="EMBL" id="CP002688">
    <property type="protein sequence ID" value="ANM71197.1"/>
    <property type="molecule type" value="Genomic_DNA"/>
</dbReference>
<dbReference type="EMBL" id="AY059785">
    <property type="protein sequence ID" value="AAL24133.1"/>
    <property type="molecule type" value="mRNA"/>
</dbReference>
<dbReference type="EMBL" id="AK316726">
    <property type="protein sequence ID" value="BAH19453.1"/>
    <property type="molecule type" value="mRNA"/>
</dbReference>
<dbReference type="PIR" id="T48600">
    <property type="entry name" value="T48600"/>
</dbReference>
<dbReference type="RefSeq" id="NP_001332743.1">
    <molecule id="Q93YS6-1"/>
    <property type="nucleotide sequence ID" value="NM_001343329.1"/>
</dbReference>
<dbReference type="RefSeq" id="NP_568297.1">
    <molecule id="Q93YS6-1"/>
    <property type="nucleotide sequence ID" value="NM_121431.3"/>
</dbReference>
<dbReference type="SMR" id="Q93YS6"/>
<dbReference type="FunCoup" id="Q93YS6">
    <property type="interactions" value="37"/>
</dbReference>
<dbReference type="IntAct" id="Q93YS6">
    <property type="interactions" value="1"/>
</dbReference>
<dbReference type="STRING" id="3702.Q93YS6"/>
<dbReference type="iPTMnet" id="Q93YS6"/>
<dbReference type="PaxDb" id="3702-AT5G14270.2"/>
<dbReference type="EnsemblPlants" id="AT5G14270.1">
    <molecule id="Q93YS6-1"/>
    <property type="protein sequence ID" value="AT5G14270.1"/>
    <property type="gene ID" value="AT5G14270"/>
</dbReference>
<dbReference type="EnsemblPlants" id="AT5G14270.3">
    <molecule id="Q93YS6-1"/>
    <property type="protein sequence ID" value="AT5G14270.3"/>
    <property type="gene ID" value="AT5G14270"/>
</dbReference>
<dbReference type="GeneID" id="831277"/>
<dbReference type="Gramene" id="AT5G14270.1">
    <molecule id="Q93YS6-1"/>
    <property type="protein sequence ID" value="AT5G14270.1"/>
    <property type="gene ID" value="AT5G14270"/>
</dbReference>
<dbReference type="Gramene" id="AT5G14270.3">
    <molecule id="Q93YS6-1"/>
    <property type="protein sequence ID" value="AT5G14270.3"/>
    <property type="gene ID" value="AT5G14270"/>
</dbReference>
<dbReference type="KEGG" id="ath:AT5G14270"/>
<dbReference type="Araport" id="AT5G14270"/>
<dbReference type="TAIR" id="AT5G14270">
    <property type="gene designation" value="BET9"/>
</dbReference>
<dbReference type="eggNOG" id="KOG1474">
    <property type="taxonomic scope" value="Eukaryota"/>
</dbReference>
<dbReference type="HOGENOM" id="CLU_007920_1_0_1"/>
<dbReference type="InParanoid" id="Q93YS6"/>
<dbReference type="OMA" id="RCCYETH"/>
<dbReference type="PhylomeDB" id="Q93YS6"/>
<dbReference type="PRO" id="PR:Q93YS6"/>
<dbReference type="Proteomes" id="UP000006548">
    <property type="component" value="Chromosome 5"/>
</dbReference>
<dbReference type="ExpressionAtlas" id="Q93YS6">
    <property type="expression patterns" value="baseline and differential"/>
</dbReference>
<dbReference type="GO" id="GO:0005634">
    <property type="term" value="C:nucleus"/>
    <property type="evidence" value="ECO:0007669"/>
    <property type="project" value="UniProtKB-SubCell"/>
</dbReference>
<dbReference type="CDD" id="cd05506">
    <property type="entry name" value="Bromo_plant1"/>
    <property type="match status" value="1"/>
</dbReference>
<dbReference type="FunFam" id="1.20.1270.220:FF:000003">
    <property type="entry name" value="Global transcription factor group E8"/>
    <property type="match status" value="1"/>
</dbReference>
<dbReference type="FunFam" id="1.20.920.10:FF:000050">
    <property type="entry name" value="Transcription factor GTE4"/>
    <property type="match status" value="1"/>
</dbReference>
<dbReference type="Gene3D" id="1.20.1270.220">
    <property type="match status" value="1"/>
</dbReference>
<dbReference type="Gene3D" id="1.20.920.10">
    <property type="entry name" value="Bromodomain-like"/>
    <property type="match status" value="1"/>
</dbReference>
<dbReference type="InterPro" id="IPR001487">
    <property type="entry name" value="Bromodomain"/>
</dbReference>
<dbReference type="InterPro" id="IPR036427">
    <property type="entry name" value="Bromodomain-like_sf"/>
</dbReference>
<dbReference type="InterPro" id="IPR052442">
    <property type="entry name" value="Env_Response_Regulator"/>
</dbReference>
<dbReference type="InterPro" id="IPR037377">
    <property type="entry name" value="GTE_bromo"/>
</dbReference>
<dbReference type="InterPro" id="IPR027353">
    <property type="entry name" value="NET_dom"/>
</dbReference>
<dbReference type="InterPro" id="IPR038336">
    <property type="entry name" value="NET_sf"/>
</dbReference>
<dbReference type="PANTHER" id="PTHR46136:SF1">
    <property type="entry name" value="TRANSCRIPTION FACTOR GTE11-RELATED"/>
    <property type="match status" value="1"/>
</dbReference>
<dbReference type="PANTHER" id="PTHR46136">
    <property type="entry name" value="TRANSCRIPTION FACTOR GTE8"/>
    <property type="match status" value="1"/>
</dbReference>
<dbReference type="Pfam" id="PF17035">
    <property type="entry name" value="BET"/>
    <property type="match status" value="1"/>
</dbReference>
<dbReference type="Pfam" id="PF00439">
    <property type="entry name" value="Bromodomain"/>
    <property type="match status" value="1"/>
</dbReference>
<dbReference type="PRINTS" id="PR00503">
    <property type="entry name" value="BROMODOMAIN"/>
</dbReference>
<dbReference type="SMART" id="SM00297">
    <property type="entry name" value="BROMO"/>
    <property type="match status" value="1"/>
</dbReference>
<dbReference type="SUPFAM" id="SSF47370">
    <property type="entry name" value="Bromodomain"/>
    <property type="match status" value="1"/>
</dbReference>
<dbReference type="PROSITE" id="PS50014">
    <property type="entry name" value="BROMODOMAIN_2"/>
    <property type="match status" value="1"/>
</dbReference>
<dbReference type="PROSITE" id="PS51525">
    <property type="entry name" value="NET"/>
    <property type="match status" value="1"/>
</dbReference>
<accession>Q93YS6</accession>
<accession>B9DFD6</accession>
<accession>Q9LYA2</accession>
<feature type="chain" id="PRO_0000406340" description="Transcription factor GTE9">
    <location>
        <begin position="1"/>
        <end position="688"/>
    </location>
</feature>
<feature type="domain" description="Bromo" evidence="3">
    <location>
        <begin position="132"/>
        <end position="238"/>
    </location>
</feature>
<feature type="domain" description="NET" evidence="4">
    <location>
        <begin position="280"/>
        <end position="361"/>
    </location>
</feature>
<feature type="region of interest" description="Disordered" evidence="5">
    <location>
        <begin position="1"/>
        <end position="36"/>
    </location>
</feature>
<feature type="region of interest" description="Disordered" evidence="5">
    <location>
        <begin position="423"/>
        <end position="505"/>
    </location>
</feature>
<feature type="region of interest" description="Transcription activation domain" evidence="1">
    <location>
        <begin position="505"/>
        <end position="688"/>
    </location>
</feature>
<feature type="region of interest" description="Disordered" evidence="5">
    <location>
        <begin position="660"/>
        <end position="688"/>
    </location>
</feature>
<feature type="coiled-coil region" evidence="2">
    <location>
        <begin position="534"/>
        <end position="613"/>
    </location>
</feature>
<feature type="compositionally biased region" description="Polar residues" evidence="5">
    <location>
        <begin position="491"/>
        <end position="500"/>
    </location>
</feature>
<feature type="modified residue" description="Phosphoserine" evidence="8">
    <location>
        <position position="478"/>
    </location>
</feature>
<feature type="sequence conflict" description="In Ref. 4; BAH19453." evidence="7" ref="4">
    <original>E</original>
    <variation>K</variation>
    <location>
        <position position="554"/>
    </location>
</feature>